<sequence length="910" mass="101200">MSSADDQTTTTSSELRADIRRLGDLLGETLVRQEGPELLDLVEKVRRLTREDGEAAAELLRGTELETAAKLVRAFSTYFHLANVTEQVHRGRELRTKRAAEGGLLARTADRLKDADPEHLRATVKNLNVRPVFTAHPTEAARRSVLNKLRRIAALLETPVIEADRRRYDTRLAENIDLVWQTDELRVVRPEPADEARNAIYYLDELHAGAVGDVLEDLTAELERVGVQLPDDTRPLTFGTWIGGDRDGNPNVTPEVTWDVLILQHEHGINDALELIDELRGFLSNSIRYTGATEELLTSLGTDLERLPEISPRYKRLNAEEPYRLKATCIRQKLENTKQRLAKGTAHQPGRDYLGTGELLHDLKLIQTSLREHRGGLFADGRMDRTIRTLAAFGLQLATMDVREHADAHHYALGQLFDRLGEESWRYADMPRDYRGKLLAKELRSRRPLAPSPAPLDAAGAKTLGVFHTVKRALAVFGPEVIESYIISMCQGADDVFAAAVLAREAGLLDLHAGWAKIGIVPLLETTDELKAADTILEDMLSDPSYRRLVALRGDVQEVMLGYSDSSKFGGITTSQWEIHRAQRRLRDVAHRYGVRLRLFHGRGGTVGRGGGPSHDAILAQPWGTLEGEIKVTEQGEVISDKYLVPSLARENLELTVAATLQASALHTAPRQSDEALARWDAAMDVVSDAAHSAYRRLVEDPDLPTYFLASTPVDQLADLHLGSRPSRRPGSGVSLDGLRAIPWVFGWTQSRQIVPGWFGVGSGLKALREAGLDTVLDEMHEQWHFFRNFLSNVEMTLAKTDLRIARHYVDTLVPDHLKHVFATIEAEHELTVREVLRITGGEKLLDTHPVLQQTFAIRDAYLDPISYLQVALLKRQRDAAAADTPPDPLLARALLLTVNGVAAGLRNTG</sequence>
<accession>Q82HE3</accession>
<gene>
    <name evidence="1" type="primary">ppc</name>
    <name type="ordered locus">SAV_3566</name>
</gene>
<comment type="function">
    <text evidence="1">Forms oxaloacetate, a four-carbon dicarboxylic acid source for the tricarboxylic acid cycle.</text>
</comment>
<comment type="catalytic activity">
    <reaction evidence="1">
        <text>oxaloacetate + phosphate = phosphoenolpyruvate + hydrogencarbonate</text>
        <dbReference type="Rhea" id="RHEA:28370"/>
        <dbReference type="ChEBI" id="CHEBI:16452"/>
        <dbReference type="ChEBI" id="CHEBI:17544"/>
        <dbReference type="ChEBI" id="CHEBI:43474"/>
        <dbReference type="ChEBI" id="CHEBI:58702"/>
        <dbReference type="EC" id="4.1.1.31"/>
    </reaction>
</comment>
<comment type="cofactor">
    <cofactor evidence="1">
        <name>Mg(2+)</name>
        <dbReference type="ChEBI" id="CHEBI:18420"/>
    </cofactor>
</comment>
<comment type="similarity">
    <text evidence="1">Belongs to the PEPCase type 1 family.</text>
</comment>
<name>CAPP_STRAW</name>
<evidence type="ECO:0000255" key="1">
    <source>
        <dbReference type="HAMAP-Rule" id="MF_00595"/>
    </source>
</evidence>
<proteinExistence type="inferred from homology"/>
<organism>
    <name type="scientific">Streptomyces avermitilis (strain ATCC 31267 / DSM 46492 / JCM 5070 / NBRC 14893 / NCIMB 12804 / NRRL 8165 / MA-4680)</name>
    <dbReference type="NCBI Taxonomy" id="227882"/>
    <lineage>
        <taxon>Bacteria</taxon>
        <taxon>Bacillati</taxon>
        <taxon>Actinomycetota</taxon>
        <taxon>Actinomycetes</taxon>
        <taxon>Kitasatosporales</taxon>
        <taxon>Streptomycetaceae</taxon>
        <taxon>Streptomyces</taxon>
    </lineage>
</organism>
<feature type="chain" id="PRO_0000166627" description="Phosphoenolpyruvate carboxylase">
    <location>
        <begin position="1"/>
        <end position="910"/>
    </location>
</feature>
<feature type="active site" evidence="1">
    <location>
        <position position="136"/>
    </location>
</feature>
<feature type="active site" evidence="1">
    <location>
        <position position="568"/>
    </location>
</feature>
<protein>
    <recommendedName>
        <fullName evidence="1">Phosphoenolpyruvate carboxylase</fullName>
        <shortName evidence="1">PEPC</shortName>
        <shortName evidence="1">PEPCase</shortName>
        <ecNumber evidence="1">4.1.1.31</ecNumber>
    </recommendedName>
</protein>
<reference key="1">
    <citation type="journal article" date="2001" name="Proc. Natl. Acad. Sci. U.S.A.">
        <title>Genome sequence of an industrial microorganism Streptomyces avermitilis: deducing the ability of producing secondary metabolites.</title>
        <authorList>
            <person name="Omura S."/>
            <person name="Ikeda H."/>
            <person name="Ishikawa J."/>
            <person name="Hanamoto A."/>
            <person name="Takahashi C."/>
            <person name="Shinose M."/>
            <person name="Takahashi Y."/>
            <person name="Horikawa H."/>
            <person name="Nakazawa H."/>
            <person name="Osonoe T."/>
            <person name="Kikuchi H."/>
            <person name="Shiba T."/>
            <person name="Sakaki Y."/>
            <person name="Hattori M."/>
        </authorList>
    </citation>
    <scope>NUCLEOTIDE SEQUENCE [LARGE SCALE GENOMIC DNA]</scope>
    <source>
        <strain>ATCC 31267 / DSM 46492 / JCM 5070 / NBRC 14893 / NCIMB 12804 / NRRL 8165 / MA-4680</strain>
    </source>
</reference>
<reference key="2">
    <citation type="journal article" date="2003" name="Nat. Biotechnol.">
        <title>Complete genome sequence and comparative analysis of the industrial microorganism Streptomyces avermitilis.</title>
        <authorList>
            <person name="Ikeda H."/>
            <person name="Ishikawa J."/>
            <person name="Hanamoto A."/>
            <person name="Shinose M."/>
            <person name="Kikuchi H."/>
            <person name="Shiba T."/>
            <person name="Sakaki Y."/>
            <person name="Hattori M."/>
            <person name="Omura S."/>
        </authorList>
    </citation>
    <scope>NUCLEOTIDE SEQUENCE [LARGE SCALE GENOMIC DNA]</scope>
    <source>
        <strain>ATCC 31267 / DSM 46492 / JCM 5070 / NBRC 14893 / NCIMB 12804 / NRRL 8165 / MA-4680</strain>
    </source>
</reference>
<keyword id="KW-0120">Carbon dioxide fixation</keyword>
<keyword id="KW-0456">Lyase</keyword>
<keyword id="KW-0460">Magnesium</keyword>
<keyword id="KW-1185">Reference proteome</keyword>
<dbReference type="EC" id="4.1.1.31" evidence="1"/>
<dbReference type="EMBL" id="BA000030">
    <property type="protein sequence ID" value="BAC71278.1"/>
    <property type="molecule type" value="Genomic_DNA"/>
</dbReference>
<dbReference type="RefSeq" id="WP_010984997.1">
    <property type="nucleotide sequence ID" value="NZ_JZJK01000090.1"/>
</dbReference>
<dbReference type="SMR" id="Q82HE3"/>
<dbReference type="GeneID" id="41540631"/>
<dbReference type="KEGG" id="sma:SAVERM_3566"/>
<dbReference type="eggNOG" id="COG2352">
    <property type="taxonomic scope" value="Bacteria"/>
</dbReference>
<dbReference type="HOGENOM" id="CLU_006557_2_0_11"/>
<dbReference type="OrthoDB" id="9768133at2"/>
<dbReference type="Proteomes" id="UP000000428">
    <property type="component" value="Chromosome"/>
</dbReference>
<dbReference type="GO" id="GO:0005829">
    <property type="term" value="C:cytosol"/>
    <property type="evidence" value="ECO:0007669"/>
    <property type="project" value="TreeGrafter"/>
</dbReference>
<dbReference type="GO" id="GO:0000287">
    <property type="term" value="F:magnesium ion binding"/>
    <property type="evidence" value="ECO:0007669"/>
    <property type="project" value="UniProtKB-UniRule"/>
</dbReference>
<dbReference type="GO" id="GO:0008964">
    <property type="term" value="F:phosphoenolpyruvate carboxylase activity"/>
    <property type="evidence" value="ECO:0007669"/>
    <property type="project" value="UniProtKB-UniRule"/>
</dbReference>
<dbReference type="GO" id="GO:0015977">
    <property type="term" value="P:carbon fixation"/>
    <property type="evidence" value="ECO:0007669"/>
    <property type="project" value="UniProtKB-UniRule"/>
</dbReference>
<dbReference type="GO" id="GO:0006107">
    <property type="term" value="P:oxaloacetate metabolic process"/>
    <property type="evidence" value="ECO:0007669"/>
    <property type="project" value="UniProtKB-UniRule"/>
</dbReference>
<dbReference type="GO" id="GO:0006099">
    <property type="term" value="P:tricarboxylic acid cycle"/>
    <property type="evidence" value="ECO:0007669"/>
    <property type="project" value="InterPro"/>
</dbReference>
<dbReference type="Gene3D" id="1.20.1440.90">
    <property type="entry name" value="Phosphoenolpyruvate/pyruvate domain"/>
    <property type="match status" value="1"/>
</dbReference>
<dbReference type="HAMAP" id="MF_00595">
    <property type="entry name" value="PEPcase_type1"/>
    <property type="match status" value="1"/>
</dbReference>
<dbReference type="InterPro" id="IPR021135">
    <property type="entry name" value="PEP_COase"/>
</dbReference>
<dbReference type="InterPro" id="IPR022805">
    <property type="entry name" value="PEP_COase_bac/pln-type"/>
</dbReference>
<dbReference type="InterPro" id="IPR018129">
    <property type="entry name" value="PEP_COase_Lys_AS"/>
</dbReference>
<dbReference type="InterPro" id="IPR033129">
    <property type="entry name" value="PEPCASE_His_AS"/>
</dbReference>
<dbReference type="InterPro" id="IPR015813">
    <property type="entry name" value="Pyrv/PenolPyrv_kinase-like_dom"/>
</dbReference>
<dbReference type="NCBIfam" id="NF000584">
    <property type="entry name" value="PRK00009.1"/>
    <property type="match status" value="1"/>
</dbReference>
<dbReference type="PANTHER" id="PTHR30523">
    <property type="entry name" value="PHOSPHOENOLPYRUVATE CARBOXYLASE"/>
    <property type="match status" value="1"/>
</dbReference>
<dbReference type="PANTHER" id="PTHR30523:SF6">
    <property type="entry name" value="PHOSPHOENOLPYRUVATE CARBOXYLASE"/>
    <property type="match status" value="1"/>
</dbReference>
<dbReference type="Pfam" id="PF00311">
    <property type="entry name" value="PEPcase"/>
    <property type="match status" value="1"/>
</dbReference>
<dbReference type="PRINTS" id="PR00150">
    <property type="entry name" value="PEPCARBXLASE"/>
</dbReference>
<dbReference type="SUPFAM" id="SSF51621">
    <property type="entry name" value="Phosphoenolpyruvate/pyruvate domain"/>
    <property type="match status" value="1"/>
</dbReference>
<dbReference type="PROSITE" id="PS00781">
    <property type="entry name" value="PEPCASE_1"/>
    <property type="match status" value="1"/>
</dbReference>
<dbReference type="PROSITE" id="PS00393">
    <property type="entry name" value="PEPCASE_2"/>
    <property type="match status" value="1"/>
</dbReference>